<reference key="1">
    <citation type="journal article" date="2001" name="Science">
        <title>Complete genome sequence of a virulent isolate of Streptococcus pneumoniae.</title>
        <authorList>
            <person name="Tettelin H."/>
            <person name="Nelson K.E."/>
            <person name="Paulsen I.T."/>
            <person name="Eisen J.A."/>
            <person name="Read T.D."/>
            <person name="Peterson S.N."/>
            <person name="Heidelberg J.F."/>
            <person name="DeBoy R.T."/>
            <person name="Haft D.H."/>
            <person name="Dodson R.J."/>
            <person name="Durkin A.S."/>
            <person name="Gwinn M.L."/>
            <person name="Kolonay J.F."/>
            <person name="Nelson W.C."/>
            <person name="Peterson J.D."/>
            <person name="Umayam L.A."/>
            <person name="White O."/>
            <person name="Salzberg S.L."/>
            <person name="Lewis M.R."/>
            <person name="Radune D."/>
            <person name="Holtzapple E.K."/>
            <person name="Khouri H.M."/>
            <person name="Wolf A.M."/>
            <person name="Utterback T.R."/>
            <person name="Hansen C.L."/>
            <person name="McDonald L.A."/>
            <person name="Feldblyum T.V."/>
            <person name="Angiuoli S.V."/>
            <person name="Dickinson T."/>
            <person name="Hickey E.K."/>
            <person name="Holt I.E."/>
            <person name="Loftus B.J."/>
            <person name="Yang F."/>
            <person name="Smith H.O."/>
            <person name="Venter J.C."/>
            <person name="Dougherty B.A."/>
            <person name="Morrison D.A."/>
            <person name="Hollingshead S.K."/>
            <person name="Fraser C.M."/>
        </authorList>
    </citation>
    <scope>NUCLEOTIDE SEQUENCE [LARGE SCALE GENOMIC DNA]</scope>
    <source>
        <strain>ATCC BAA-334 / TIGR4</strain>
    </source>
</reference>
<sequence>MAVSLNDIKTKIASTKNTSQITNAMQMVSAAKLGRSEEAARNFQVYAQKVRKLLTDILHGNGAGASTNPMLISRSVKKTGYIVITSDRGLVGGYNSSILKAVMELKEEYHPDGKGFEMICIGGMGADFFKARGIQPLYELRGLSDQPSFDQVRKIISKTVEMYQNELFDELYVCYNHHVNTLTSQMRVEQMLPIVDLDPNEADEEYSLTFELETSREEILEQLLPQFAESMIYGAIIDAKTAENAAGMTAMQTATDNAKKVINDLTIQYNRARQAAITQEITEIVAGASALE</sequence>
<gene>
    <name evidence="1" type="primary">atpG</name>
    <name type="ordered locus">SP_1509</name>
</gene>
<dbReference type="EMBL" id="AE005672">
    <property type="protein sequence ID" value="AAK75600.1"/>
    <property type="molecule type" value="Genomic_DNA"/>
</dbReference>
<dbReference type="PIR" id="G95175">
    <property type="entry name" value="G95175"/>
</dbReference>
<dbReference type="PIR" id="H98041">
    <property type="entry name" value="H98041"/>
</dbReference>
<dbReference type="RefSeq" id="WP_000301212.1">
    <property type="nucleotide sequence ID" value="NZ_CP155539.1"/>
</dbReference>
<dbReference type="SMR" id="Q97PT5"/>
<dbReference type="PaxDb" id="170187-SP_1509"/>
<dbReference type="EnsemblBacteria" id="AAK75600">
    <property type="protein sequence ID" value="AAK75600"/>
    <property type="gene ID" value="SP_1509"/>
</dbReference>
<dbReference type="KEGG" id="spn:SP_1509"/>
<dbReference type="eggNOG" id="COG0224">
    <property type="taxonomic scope" value="Bacteria"/>
</dbReference>
<dbReference type="PhylomeDB" id="Q97PT5"/>
<dbReference type="BioCyc" id="SPNE170187:G1FZB-1525-MONOMER"/>
<dbReference type="Proteomes" id="UP000000585">
    <property type="component" value="Chromosome"/>
</dbReference>
<dbReference type="GO" id="GO:0005886">
    <property type="term" value="C:plasma membrane"/>
    <property type="evidence" value="ECO:0007669"/>
    <property type="project" value="UniProtKB-SubCell"/>
</dbReference>
<dbReference type="GO" id="GO:0045259">
    <property type="term" value="C:proton-transporting ATP synthase complex"/>
    <property type="evidence" value="ECO:0007669"/>
    <property type="project" value="UniProtKB-KW"/>
</dbReference>
<dbReference type="GO" id="GO:0005524">
    <property type="term" value="F:ATP binding"/>
    <property type="evidence" value="ECO:0007669"/>
    <property type="project" value="UniProtKB-UniRule"/>
</dbReference>
<dbReference type="GO" id="GO:0046933">
    <property type="term" value="F:proton-transporting ATP synthase activity, rotational mechanism"/>
    <property type="evidence" value="ECO:0007669"/>
    <property type="project" value="UniProtKB-UniRule"/>
</dbReference>
<dbReference type="GO" id="GO:0042777">
    <property type="term" value="P:proton motive force-driven plasma membrane ATP synthesis"/>
    <property type="evidence" value="ECO:0007669"/>
    <property type="project" value="UniProtKB-UniRule"/>
</dbReference>
<dbReference type="CDD" id="cd12151">
    <property type="entry name" value="F1-ATPase_gamma"/>
    <property type="match status" value="1"/>
</dbReference>
<dbReference type="FunFam" id="3.40.1380.10:FF:000002">
    <property type="entry name" value="ATP synthase gamma chain"/>
    <property type="match status" value="1"/>
</dbReference>
<dbReference type="Gene3D" id="3.40.1380.10">
    <property type="match status" value="1"/>
</dbReference>
<dbReference type="Gene3D" id="1.10.287.80">
    <property type="entry name" value="ATP synthase, gamma subunit, helix hairpin domain"/>
    <property type="match status" value="1"/>
</dbReference>
<dbReference type="HAMAP" id="MF_00815">
    <property type="entry name" value="ATP_synth_gamma_bact"/>
    <property type="match status" value="1"/>
</dbReference>
<dbReference type="InterPro" id="IPR035968">
    <property type="entry name" value="ATP_synth_F1_ATPase_gsu"/>
</dbReference>
<dbReference type="InterPro" id="IPR000131">
    <property type="entry name" value="ATP_synth_F1_gsu"/>
</dbReference>
<dbReference type="InterPro" id="IPR023632">
    <property type="entry name" value="ATP_synth_F1_gsu_CS"/>
</dbReference>
<dbReference type="NCBIfam" id="TIGR01146">
    <property type="entry name" value="ATPsyn_F1gamma"/>
    <property type="match status" value="1"/>
</dbReference>
<dbReference type="NCBIfam" id="NF004147">
    <property type="entry name" value="PRK05621.2-1"/>
    <property type="match status" value="1"/>
</dbReference>
<dbReference type="PANTHER" id="PTHR11693">
    <property type="entry name" value="ATP SYNTHASE GAMMA CHAIN"/>
    <property type="match status" value="1"/>
</dbReference>
<dbReference type="PANTHER" id="PTHR11693:SF22">
    <property type="entry name" value="ATP SYNTHASE SUBUNIT GAMMA, MITOCHONDRIAL"/>
    <property type="match status" value="1"/>
</dbReference>
<dbReference type="Pfam" id="PF00231">
    <property type="entry name" value="ATP-synt"/>
    <property type="match status" value="1"/>
</dbReference>
<dbReference type="PRINTS" id="PR00126">
    <property type="entry name" value="ATPASEGAMMA"/>
</dbReference>
<dbReference type="SUPFAM" id="SSF52943">
    <property type="entry name" value="ATP synthase (F1-ATPase), gamma subunit"/>
    <property type="match status" value="1"/>
</dbReference>
<dbReference type="PROSITE" id="PS00153">
    <property type="entry name" value="ATPASE_GAMMA"/>
    <property type="match status" value="1"/>
</dbReference>
<feature type="chain" id="PRO_0000073387" description="ATP synthase gamma chain">
    <location>
        <begin position="1"/>
        <end position="292"/>
    </location>
</feature>
<organism>
    <name type="scientific">Streptococcus pneumoniae serotype 4 (strain ATCC BAA-334 / TIGR4)</name>
    <dbReference type="NCBI Taxonomy" id="170187"/>
    <lineage>
        <taxon>Bacteria</taxon>
        <taxon>Bacillati</taxon>
        <taxon>Bacillota</taxon>
        <taxon>Bacilli</taxon>
        <taxon>Lactobacillales</taxon>
        <taxon>Streptococcaceae</taxon>
        <taxon>Streptococcus</taxon>
    </lineage>
</organism>
<protein>
    <recommendedName>
        <fullName evidence="1">ATP synthase gamma chain</fullName>
    </recommendedName>
    <alternativeName>
        <fullName evidence="1">ATP synthase F1 sector gamma subunit</fullName>
    </alternativeName>
    <alternativeName>
        <fullName evidence="1">F-ATPase gamma subunit</fullName>
    </alternativeName>
</protein>
<proteinExistence type="inferred from homology"/>
<accession>Q97PT5</accession>
<accession>Q7BDA7</accession>
<name>ATPG_STRPN</name>
<evidence type="ECO:0000255" key="1">
    <source>
        <dbReference type="HAMAP-Rule" id="MF_00815"/>
    </source>
</evidence>
<keyword id="KW-0066">ATP synthesis</keyword>
<keyword id="KW-1003">Cell membrane</keyword>
<keyword id="KW-0139">CF(1)</keyword>
<keyword id="KW-0375">Hydrogen ion transport</keyword>
<keyword id="KW-0406">Ion transport</keyword>
<keyword id="KW-0472">Membrane</keyword>
<keyword id="KW-1185">Reference proteome</keyword>
<keyword id="KW-0813">Transport</keyword>
<comment type="function">
    <text evidence="1">Produces ATP from ADP in the presence of a proton gradient across the membrane. The gamma chain is believed to be important in regulating ATPase activity and the flow of protons through the CF(0) complex.</text>
</comment>
<comment type="subunit">
    <text evidence="1">F-type ATPases have 2 components, CF(1) - the catalytic core - and CF(0) - the membrane proton channel. CF(1) has five subunits: alpha(3), beta(3), gamma(1), delta(1), epsilon(1). CF(0) has three main subunits: a, b and c.</text>
</comment>
<comment type="subcellular location">
    <subcellularLocation>
        <location evidence="1">Cell membrane</location>
        <topology evidence="1">Peripheral membrane protein</topology>
    </subcellularLocation>
</comment>
<comment type="similarity">
    <text evidence="1">Belongs to the ATPase gamma chain family.</text>
</comment>